<comment type="function">
    <text evidence="1">DNA-dependent RNA polymerase catalyzes the transcription of DNA into RNA using the four ribonucleoside triphosphates as substrates.</text>
</comment>
<comment type="catalytic activity">
    <reaction evidence="1">
        <text>RNA(n) + a ribonucleoside 5'-triphosphate = RNA(n+1) + diphosphate</text>
        <dbReference type="Rhea" id="RHEA:21248"/>
        <dbReference type="Rhea" id="RHEA-COMP:14527"/>
        <dbReference type="Rhea" id="RHEA-COMP:17342"/>
        <dbReference type="ChEBI" id="CHEBI:33019"/>
        <dbReference type="ChEBI" id="CHEBI:61557"/>
        <dbReference type="ChEBI" id="CHEBI:140395"/>
        <dbReference type="EC" id="2.7.7.6"/>
    </reaction>
</comment>
<comment type="subunit">
    <text evidence="1">Homodimer. The RNAP catalytic core consists of 2 alpha, 1 beta, 1 beta' and 1 omega subunit. When a sigma factor is associated with the core the holoenzyme is formed, which can initiate transcription.</text>
</comment>
<comment type="domain">
    <text evidence="1">The N-terminal domain is essential for RNAP assembly and basal transcription, whereas the C-terminal domain is involved in interaction with transcriptional regulators and with upstream promoter elements.</text>
</comment>
<comment type="similarity">
    <text evidence="1">Belongs to the RNA polymerase alpha chain family.</text>
</comment>
<evidence type="ECO:0000255" key="1">
    <source>
        <dbReference type="HAMAP-Rule" id="MF_00059"/>
    </source>
</evidence>
<reference key="1">
    <citation type="submission" date="2006-10" db="EMBL/GenBank/DDBJ databases">
        <authorList>
            <person name="Fleischmann R.D."/>
            <person name="Dodson R.J."/>
            <person name="Haft D.H."/>
            <person name="Merkel J.S."/>
            <person name="Nelson W.C."/>
            <person name="Fraser C.M."/>
        </authorList>
    </citation>
    <scope>NUCLEOTIDE SEQUENCE [LARGE SCALE GENOMIC DNA]</scope>
    <source>
        <strain>104</strain>
    </source>
</reference>
<dbReference type="EC" id="2.7.7.6" evidence="1"/>
<dbReference type="EMBL" id="CP000479">
    <property type="protein sequence ID" value="ABK65760.1"/>
    <property type="molecule type" value="Genomic_DNA"/>
</dbReference>
<dbReference type="RefSeq" id="WP_003873443.1">
    <property type="nucleotide sequence ID" value="NC_008595.1"/>
</dbReference>
<dbReference type="SMR" id="A0QKU5"/>
<dbReference type="KEGG" id="mav:MAV_4398"/>
<dbReference type="HOGENOM" id="CLU_053084_0_1_11"/>
<dbReference type="Proteomes" id="UP000001574">
    <property type="component" value="Chromosome"/>
</dbReference>
<dbReference type="GO" id="GO:0005737">
    <property type="term" value="C:cytoplasm"/>
    <property type="evidence" value="ECO:0007669"/>
    <property type="project" value="UniProtKB-ARBA"/>
</dbReference>
<dbReference type="GO" id="GO:0000428">
    <property type="term" value="C:DNA-directed RNA polymerase complex"/>
    <property type="evidence" value="ECO:0007669"/>
    <property type="project" value="UniProtKB-KW"/>
</dbReference>
<dbReference type="GO" id="GO:0003677">
    <property type="term" value="F:DNA binding"/>
    <property type="evidence" value="ECO:0007669"/>
    <property type="project" value="UniProtKB-UniRule"/>
</dbReference>
<dbReference type="GO" id="GO:0003899">
    <property type="term" value="F:DNA-directed RNA polymerase activity"/>
    <property type="evidence" value="ECO:0007669"/>
    <property type="project" value="UniProtKB-UniRule"/>
</dbReference>
<dbReference type="GO" id="GO:0046983">
    <property type="term" value="F:protein dimerization activity"/>
    <property type="evidence" value="ECO:0007669"/>
    <property type="project" value="InterPro"/>
</dbReference>
<dbReference type="GO" id="GO:0006351">
    <property type="term" value="P:DNA-templated transcription"/>
    <property type="evidence" value="ECO:0007669"/>
    <property type="project" value="UniProtKB-UniRule"/>
</dbReference>
<dbReference type="CDD" id="cd06928">
    <property type="entry name" value="RNAP_alpha_NTD"/>
    <property type="match status" value="1"/>
</dbReference>
<dbReference type="FunFam" id="1.10.150.20:FF:000001">
    <property type="entry name" value="DNA-directed RNA polymerase subunit alpha"/>
    <property type="match status" value="1"/>
</dbReference>
<dbReference type="FunFam" id="2.170.120.12:FF:000001">
    <property type="entry name" value="DNA-directed RNA polymerase subunit alpha"/>
    <property type="match status" value="1"/>
</dbReference>
<dbReference type="Gene3D" id="1.10.150.20">
    <property type="entry name" value="5' to 3' exonuclease, C-terminal subdomain"/>
    <property type="match status" value="1"/>
</dbReference>
<dbReference type="Gene3D" id="2.170.120.12">
    <property type="entry name" value="DNA-directed RNA polymerase, insert domain"/>
    <property type="match status" value="1"/>
</dbReference>
<dbReference type="Gene3D" id="3.30.1360.10">
    <property type="entry name" value="RNA polymerase, RBP11-like subunit"/>
    <property type="match status" value="1"/>
</dbReference>
<dbReference type="HAMAP" id="MF_00059">
    <property type="entry name" value="RNApol_bact_RpoA"/>
    <property type="match status" value="1"/>
</dbReference>
<dbReference type="InterPro" id="IPR011262">
    <property type="entry name" value="DNA-dir_RNA_pol_insert"/>
</dbReference>
<dbReference type="InterPro" id="IPR011263">
    <property type="entry name" value="DNA-dir_RNA_pol_RpoA/D/Rpb3"/>
</dbReference>
<dbReference type="InterPro" id="IPR011773">
    <property type="entry name" value="DNA-dir_RpoA"/>
</dbReference>
<dbReference type="InterPro" id="IPR036603">
    <property type="entry name" value="RBP11-like"/>
</dbReference>
<dbReference type="InterPro" id="IPR011260">
    <property type="entry name" value="RNAP_asu_C"/>
</dbReference>
<dbReference type="InterPro" id="IPR036643">
    <property type="entry name" value="RNApol_insert_sf"/>
</dbReference>
<dbReference type="NCBIfam" id="NF003513">
    <property type="entry name" value="PRK05182.1-2"/>
    <property type="match status" value="1"/>
</dbReference>
<dbReference type="NCBIfam" id="NF003514">
    <property type="entry name" value="PRK05182.1-4"/>
    <property type="match status" value="1"/>
</dbReference>
<dbReference type="NCBIfam" id="NF003519">
    <property type="entry name" value="PRK05182.2-5"/>
    <property type="match status" value="1"/>
</dbReference>
<dbReference type="NCBIfam" id="TIGR02027">
    <property type="entry name" value="rpoA"/>
    <property type="match status" value="1"/>
</dbReference>
<dbReference type="Pfam" id="PF01000">
    <property type="entry name" value="RNA_pol_A_bac"/>
    <property type="match status" value="1"/>
</dbReference>
<dbReference type="Pfam" id="PF03118">
    <property type="entry name" value="RNA_pol_A_CTD"/>
    <property type="match status" value="1"/>
</dbReference>
<dbReference type="Pfam" id="PF01193">
    <property type="entry name" value="RNA_pol_L"/>
    <property type="match status" value="1"/>
</dbReference>
<dbReference type="SMART" id="SM00662">
    <property type="entry name" value="RPOLD"/>
    <property type="match status" value="1"/>
</dbReference>
<dbReference type="SUPFAM" id="SSF47789">
    <property type="entry name" value="C-terminal domain of RNA polymerase alpha subunit"/>
    <property type="match status" value="1"/>
</dbReference>
<dbReference type="SUPFAM" id="SSF56553">
    <property type="entry name" value="Insert subdomain of RNA polymerase alpha subunit"/>
    <property type="match status" value="1"/>
</dbReference>
<dbReference type="SUPFAM" id="SSF55257">
    <property type="entry name" value="RBP11-like subunits of RNA polymerase"/>
    <property type="match status" value="1"/>
</dbReference>
<accession>A0QKU5</accession>
<gene>
    <name evidence="1" type="primary">rpoA</name>
    <name type="ordered locus">MAV_4398</name>
</gene>
<protein>
    <recommendedName>
        <fullName evidence="1">DNA-directed RNA polymerase subunit alpha</fullName>
        <shortName evidence="1">RNAP subunit alpha</shortName>
        <ecNumber evidence="1">2.7.7.6</ecNumber>
    </recommendedName>
    <alternativeName>
        <fullName evidence="1">RNA polymerase subunit alpha</fullName>
    </alternativeName>
    <alternativeName>
        <fullName evidence="1">Transcriptase subunit alpha</fullName>
    </alternativeName>
</protein>
<sequence>MLISQRPTLSEEVLTDNRSQFVIEPLEPGFGYTLGNSLRRTLLSSIPGAAVTSIRIDGVLHEFTTVPGVKEDVTAIILNLKSLVVSSEEDEPVTMYLRKQGPGEVTAGDIVPPAGVTVHNPELHIATLNDKGKLEVELVVERGRGYVPAVQNRASGAEIGRIPVDSIYSPVLKVTYKVDATRVEQRTDFDKLILDVETKSSITPRDALASAGKTLVELFGLARELNVEAEGIEIGPSPAEADHIASFALPIDDLDLTVRSYNCLKREGVHTVGELVSRTESDLLDIRNFGQKSIDEVKVKLHQLGLSLKDSPPSFDPSQVAGYDVATGTWSTEAAYDDQDYAETEQL</sequence>
<name>RPOA_MYCA1</name>
<keyword id="KW-0240">DNA-directed RNA polymerase</keyword>
<keyword id="KW-0548">Nucleotidyltransferase</keyword>
<keyword id="KW-0804">Transcription</keyword>
<keyword id="KW-0808">Transferase</keyword>
<feature type="chain" id="PRO_0000296833" description="DNA-directed RNA polymerase subunit alpha">
    <location>
        <begin position="1"/>
        <end position="347"/>
    </location>
</feature>
<feature type="region of interest" description="Alpha N-terminal domain (alpha-NTD)" evidence="1">
    <location>
        <begin position="1"/>
        <end position="226"/>
    </location>
</feature>
<feature type="region of interest" description="Alpha C-terminal domain (alpha-CTD)" evidence="1">
    <location>
        <begin position="241"/>
        <end position="347"/>
    </location>
</feature>
<organism>
    <name type="scientific">Mycobacterium avium (strain 104)</name>
    <dbReference type="NCBI Taxonomy" id="243243"/>
    <lineage>
        <taxon>Bacteria</taxon>
        <taxon>Bacillati</taxon>
        <taxon>Actinomycetota</taxon>
        <taxon>Actinomycetes</taxon>
        <taxon>Mycobacteriales</taxon>
        <taxon>Mycobacteriaceae</taxon>
        <taxon>Mycobacterium</taxon>
        <taxon>Mycobacterium avium complex (MAC)</taxon>
    </lineage>
</organism>
<proteinExistence type="inferred from homology"/>